<accession>A6UR14</accession>
<reference key="1">
    <citation type="submission" date="2007-06" db="EMBL/GenBank/DDBJ databases">
        <title>Complete sequence of Methanococcus vannielii SB.</title>
        <authorList>
            <consortium name="US DOE Joint Genome Institute"/>
            <person name="Copeland A."/>
            <person name="Lucas S."/>
            <person name="Lapidus A."/>
            <person name="Barry K."/>
            <person name="Glavina del Rio T."/>
            <person name="Dalin E."/>
            <person name="Tice H."/>
            <person name="Pitluck S."/>
            <person name="Chain P."/>
            <person name="Malfatti S."/>
            <person name="Shin M."/>
            <person name="Vergez L."/>
            <person name="Schmutz J."/>
            <person name="Larimer F."/>
            <person name="Land M."/>
            <person name="Hauser L."/>
            <person name="Kyrpides N."/>
            <person name="Anderson I."/>
            <person name="Sieprawska-Lupa M."/>
            <person name="Whitman W.B."/>
            <person name="Richardson P."/>
        </authorList>
    </citation>
    <scope>NUCLEOTIDE SEQUENCE [LARGE SCALE GENOMIC DNA]</scope>
    <source>
        <strain>ATCC 35089 / DSM 1224 / JCM 13029 / OCM 148 / SB</strain>
    </source>
</reference>
<proteinExistence type="inferred from homology"/>
<dbReference type="EMBL" id="CP000742">
    <property type="protein sequence ID" value="ABR54936.1"/>
    <property type="status" value="ALT_INIT"/>
    <property type="molecule type" value="Genomic_DNA"/>
</dbReference>
<dbReference type="RefSeq" id="WP_012065865.1">
    <property type="nucleotide sequence ID" value="NC_009634.1"/>
</dbReference>
<dbReference type="SMR" id="A6UR14"/>
<dbReference type="STRING" id="406327.Mevan_1033"/>
<dbReference type="GeneID" id="5325489"/>
<dbReference type="KEGG" id="mvn:Mevan_1033"/>
<dbReference type="eggNOG" id="arCOG04270">
    <property type="taxonomic scope" value="Archaea"/>
</dbReference>
<dbReference type="HOGENOM" id="CLU_100097_0_0_2"/>
<dbReference type="OrthoDB" id="5935at2157"/>
<dbReference type="Proteomes" id="UP000001107">
    <property type="component" value="Chromosome"/>
</dbReference>
<dbReference type="GO" id="GO:0003677">
    <property type="term" value="F:DNA binding"/>
    <property type="evidence" value="ECO:0007669"/>
    <property type="project" value="UniProtKB-KW"/>
</dbReference>
<dbReference type="GO" id="GO:0006355">
    <property type="term" value="P:regulation of DNA-templated transcription"/>
    <property type="evidence" value="ECO:0007669"/>
    <property type="project" value="InterPro"/>
</dbReference>
<dbReference type="GO" id="GO:0006367">
    <property type="term" value="P:transcription initiation at RNA polymerase II promoter"/>
    <property type="evidence" value="ECO:0007669"/>
    <property type="project" value="InterPro"/>
</dbReference>
<dbReference type="Gene3D" id="1.10.10.10">
    <property type="entry name" value="Winged helix-like DNA-binding domain superfamily/Winged helix DNA-binding domain"/>
    <property type="match status" value="1"/>
</dbReference>
<dbReference type="HAMAP" id="MF_01909">
    <property type="entry name" value="TFE_arch"/>
    <property type="match status" value="1"/>
</dbReference>
<dbReference type="InterPro" id="IPR016481">
    <property type="entry name" value="TF_E_archaea"/>
</dbReference>
<dbReference type="InterPro" id="IPR039997">
    <property type="entry name" value="TFE"/>
</dbReference>
<dbReference type="InterPro" id="IPR017919">
    <property type="entry name" value="TFIIE/TFIIEa_HTH"/>
</dbReference>
<dbReference type="InterPro" id="IPR002853">
    <property type="entry name" value="TFIIE_asu"/>
</dbReference>
<dbReference type="InterPro" id="IPR024550">
    <property type="entry name" value="TFIIEa/SarR/Rpc3_HTH_dom"/>
</dbReference>
<dbReference type="InterPro" id="IPR036388">
    <property type="entry name" value="WH-like_DNA-bd_sf"/>
</dbReference>
<dbReference type="InterPro" id="IPR036390">
    <property type="entry name" value="WH_DNA-bd_sf"/>
</dbReference>
<dbReference type="NCBIfam" id="NF004910">
    <property type="entry name" value="PRK06266.1"/>
    <property type="match status" value="1"/>
</dbReference>
<dbReference type="NCBIfam" id="TIGR00373">
    <property type="entry name" value="transcription factor E"/>
    <property type="match status" value="1"/>
</dbReference>
<dbReference type="PANTHER" id="PTHR13097:SF7">
    <property type="entry name" value="GENERAL TRANSCRIPTION FACTOR IIE SUBUNIT 1"/>
    <property type="match status" value="1"/>
</dbReference>
<dbReference type="PANTHER" id="PTHR13097">
    <property type="entry name" value="TRANSCRIPTION INITIATION FACTOR IIE, ALPHA SUBUNIT"/>
    <property type="match status" value="1"/>
</dbReference>
<dbReference type="Pfam" id="PF02002">
    <property type="entry name" value="TFIIE_alpha"/>
    <property type="match status" value="1"/>
</dbReference>
<dbReference type="PIRSF" id="PIRSF006373">
    <property type="entry name" value="TF_E_archaea"/>
    <property type="match status" value="1"/>
</dbReference>
<dbReference type="SMART" id="SM00531">
    <property type="entry name" value="TFIIE"/>
    <property type="match status" value="1"/>
</dbReference>
<dbReference type="SUPFAM" id="SSF46785">
    <property type="entry name" value="Winged helix' DNA-binding domain"/>
    <property type="match status" value="1"/>
</dbReference>
<dbReference type="PROSITE" id="PS51344">
    <property type="entry name" value="HTH_TFE_IIE"/>
    <property type="match status" value="1"/>
</dbReference>
<protein>
    <recommendedName>
        <fullName evidence="1">Transcription factor E</fullName>
        <shortName evidence="1">TFE</shortName>
    </recommendedName>
    <alternativeName>
        <fullName evidence="1">TFIIE subunit alpha homolog</fullName>
    </alternativeName>
    <alternativeName>
        <fullName evidence="1">Transcription initiation factor TFIIE</fullName>
    </alternativeName>
</protein>
<keyword id="KW-0238">DNA-binding</keyword>
<keyword id="KW-0804">Transcription</keyword>
<keyword id="KW-0805">Transcription regulation</keyword>
<organism>
    <name type="scientific">Methanococcus vannielii (strain ATCC 35089 / DSM 1224 / JCM 13029 / OCM 148 / SB)</name>
    <dbReference type="NCBI Taxonomy" id="406327"/>
    <lineage>
        <taxon>Archaea</taxon>
        <taxon>Methanobacteriati</taxon>
        <taxon>Methanobacteriota</taxon>
        <taxon>Methanomada group</taxon>
        <taxon>Methanococci</taxon>
        <taxon>Methanococcales</taxon>
        <taxon>Methanococcaceae</taxon>
        <taxon>Methanococcus</taxon>
    </lineage>
</organism>
<comment type="function">
    <text evidence="1">Transcription factor that plays a role in the activation of archaeal genes transcribed by RNA polymerase. Facilitates transcription initiation by enhancing TATA-box recognition by TATA-box-binding protein (Tbp), and transcription factor B (Tfb) and RNA polymerase recruitment. Not absolutely required for transcription in vitro, but particularly important in cases where Tbp or Tfb function is not optimal. It dynamically alters the nucleic acid-binding properties of RNA polymerases by stabilizing the initiation complex and destabilizing elongation complexes. Seems to translocate with the RNA polymerase following initiation and acts by binding to the non template strand of the transcription bubble in elongation complexes.</text>
</comment>
<comment type="subunit">
    <text evidence="1">Monomer. Interaction with RNA polymerase subunits RpoF and RpoE is necessary for Tfe stimulatory transcription activity. Able to interact with Tbp and RNA polymerase in the absence of DNA promoter. Interacts both with the preinitiation and elongation complexes.</text>
</comment>
<comment type="domain">
    <text evidence="1">The winged helix domain is involved in binding to DNA in the preinitiation complex.</text>
</comment>
<comment type="similarity">
    <text evidence="1">Belongs to the TFE family.</text>
</comment>
<comment type="sequence caution" evidence="2">
    <conflict type="erroneous initiation">
        <sequence resource="EMBL-CDS" id="ABR54936"/>
    </conflict>
</comment>
<gene>
    <name evidence="1" type="primary">tfe</name>
    <name type="ordered locus">Mevan_1033</name>
</gene>
<sequence>MLDNPLIQQVLFEVMEEDVVGFDVLNVLIDSNEVTDDEISRQLEVKLNNIRRILYKLYEARLVDYNREKDEETNWYTYTWKPSLEKLPALVVKKMKNILDELKKQLSTEENGMFFYCMGCELKFTFEDAMDMGFRCPQCGGVLHEYDNKKDMATIKEQIAYIEDEFNQNPLFFKY</sequence>
<name>TFE_METVS</name>
<feature type="chain" id="PRO_0000326602" description="Transcription factor E">
    <location>
        <begin position="1"/>
        <end position="175"/>
    </location>
</feature>
<feature type="domain" description="HTH TFE/IIEalpha-type" evidence="1">
    <location>
        <begin position="3"/>
        <end position="88"/>
    </location>
</feature>
<evidence type="ECO:0000255" key="1">
    <source>
        <dbReference type="HAMAP-Rule" id="MF_01909"/>
    </source>
</evidence>
<evidence type="ECO:0000305" key="2"/>